<sequence>MTQSDFFSLDGISKRFGVVQALDNVSIAFRPGEVLALVGENGAGKSTMMRILEGVSGPDTGTVRHGSTPIVFGEPRDSHRAGIRVIHQEPEIVPNLTVAENIFVGELPRLAGVLLDWRKLEEQTDRVLATFGMQQDMRPRQLCGTLGPAQRQMIEIMRAIRAGGRLIAFDEPTSSLTDDEARRLFSVVRRLREKGTSIIYISHRLNEIIDLADRIVVLRDGRLVDDSPAAGASEQTIAKLMVGRNIDDLFTRETWRSGEQLLDVAGLTTDRVNDVSLRVRRGEVLGIAGLMGAGRSELAKAIVGYDRRIAGTIAMNGVPVLPNSPHAAIVAGIGFAPEDRKHEALLLFRSILDNAALCVPDKTSSFGFFNRRKAMEIVSPLAAKMSIKAPNLDEQVSKLSGGNQQKVVLARWLARQPMLLILDEPTRGIDIGAKAEIYRLIDELAASGIGIILISSEMPELIGLADRVLVMAGGRITAELARPDIDEATILKHAMPQSASSPGDYIQ</sequence>
<comment type="function">
    <text evidence="1">Part of the ABC transporter complex RbsABC involved in ribose import. Responsible for energy coupling to the transport system.</text>
</comment>
<comment type="catalytic activity">
    <reaction evidence="1">
        <text>D-ribose(out) + ATP + H2O = D-ribose(in) + ADP + phosphate + H(+)</text>
        <dbReference type="Rhea" id="RHEA:29903"/>
        <dbReference type="ChEBI" id="CHEBI:15377"/>
        <dbReference type="ChEBI" id="CHEBI:15378"/>
        <dbReference type="ChEBI" id="CHEBI:30616"/>
        <dbReference type="ChEBI" id="CHEBI:43474"/>
        <dbReference type="ChEBI" id="CHEBI:47013"/>
        <dbReference type="ChEBI" id="CHEBI:456216"/>
        <dbReference type="EC" id="7.5.2.7"/>
    </reaction>
</comment>
<comment type="subunit">
    <text evidence="1">The complex is composed of an ATP-binding protein (RbsA), two transmembrane proteins (RbsC) and a solute-binding protein (RbsB).</text>
</comment>
<comment type="subcellular location">
    <subcellularLocation>
        <location evidence="1">Cell inner membrane</location>
        <topology evidence="1">Peripheral membrane protein</topology>
    </subcellularLocation>
</comment>
<comment type="similarity">
    <text evidence="1">Belongs to the ABC transporter superfamily. Ribose importer (TC 3.A.1.2.1) family.</text>
</comment>
<proteinExistence type="inferred from homology"/>
<protein>
    <recommendedName>
        <fullName evidence="1">Ribose import ATP-binding protein RbsA 2</fullName>
        <ecNumber evidence="1">7.5.2.7</ecNumber>
    </recommendedName>
</protein>
<organism>
    <name type="scientific">Mesorhizobium japonicum (strain LMG 29417 / CECT 9101 / MAFF 303099)</name>
    <name type="common">Mesorhizobium loti (strain MAFF 303099)</name>
    <dbReference type="NCBI Taxonomy" id="266835"/>
    <lineage>
        <taxon>Bacteria</taxon>
        <taxon>Pseudomonadati</taxon>
        <taxon>Pseudomonadota</taxon>
        <taxon>Alphaproteobacteria</taxon>
        <taxon>Hyphomicrobiales</taxon>
        <taxon>Phyllobacteriaceae</taxon>
        <taxon>Mesorhizobium</taxon>
    </lineage>
</organism>
<reference key="1">
    <citation type="journal article" date="2000" name="DNA Res.">
        <title>Complete genome structure of the nitrogen-fixing symbiotic bacterium Mesorhizobium loti.</title>
        <authorList>
            <person name="Kaneko T."/>
            <person name="Nakamura Y."/>
            <person name="Sato S."/>
            <person name="Asamizu E."/>
            <person name="Kato T."/>
            <person name="Sasamoto S."/>
            <person name="Watanabe A."/>
            <person name="Idesawa K."/>
            <person name="Ishikawa A."/>
            <person name="Kawashima K."/>
            <person name="Kimura T."/>
            <person name="Kishida Y."/>
            <person name="Kiyokawa C."/>
            <person name="Kohara M."/>
            <person name="Matsumoto M."/>
            <person name="Matsuno A."/>
            <person name="Mochizuki Y."/>
            <person name="Nakayama S."/>
            <person name="Nakazaki N."/>
            <person name="Shimpo S."/>
            <person name="Sugimoto M."/>
            <person name="Takeuchi C."/>
            <person name="Yamada M."/>
            <person name="Tabata S."/>
        </authorList>
    </citation>
    <scope>NUCLEOTIDE SEQUENCE [LARGE SCALE GENOMIC DNA]</scope>
    <source>
        <strain>LMG 29417 / CECT 9101 / MAFF 303099</strain>
    </source>
</reference>
<accession>Q987E7</accession>
<gene>
    <name evidence="1" type="primary">rbsA2</name>
    <name type="ordered locus">mll7081</name>
</gene>
<feature type="chain" id="PRO_0000261087" description="Ribose import ATP-binding protein RbsA 2">
    <location>
        <begin position="1"/>
        <end position="507"/>
    </location>
</feature>
<feature type="domain" description="ABC transporter 1" evidence="1">
    <location>
        <begin position="7"/>
        <end position="245"/>
    </location>
</feature>
<feature type="domain" description="ABC transporter 2" evidence="1">
    <location>
        <begin position="249"/>
        <end position="498"/>
    </location>
</feature>
<feature type="binding site" evidence="1">
    <location>
        <begin position="39"/>
        <end position="46"/>
    </location>
    <ligand>
        <name>ATP</name>
        <dbReference type="ChEBI" id="CHEBI:30616"/>
    </ligand>
</feature>
<keyword id="KW-0067">ATP-binding</keyword>
<keyword id="KW-0997">Cell inner membrane</keyword>
<keyword id="KW-1003">Cell membrane</keyword>
<keyword id="KW-0472">Membrane</keyword>
<keyword id="KW-0547">Nucleotide-binding</keyword>
<keyword id="KW-0677">Repeat</keyword>
<keyword id="KW-0762">Sugar transport</keyword>
<keyword id="KW-1278">Translocase</keyword>
<keyword id="KW-0813">Transport</keyword>
<evidence type="ECO:0000255" key="1">
    <source>
        <dbReference type="HAMAP-Rule" id="MF_01716"/>
    </source>
</evidence>
<dbReference type="EC" id="7.5.2.7" evidence="1"/>
<dbReference type="EMBL" id="BA000012">
    <property type="protein sequence ID" value="BAB53256.1"/>
    <property type="molecule type" value="Genomic_DNA"/>
</dbReference>
<dbReference type="RefSeq" id="WP_010914563.1">
    <property type="nucleotide sequence ID" value="NC_002678.2"/>
</dbReference>
<dbReference type="SMR" id="Q987E7"/>
<dbReference type="KEGG" id="mlo:mll7081"/>
<dbReference type="PATRIC" id="fig|266835.9.peg.5649"/>
<dbReference type="eggNOG" id="COG1129">
    <property type="taxonomic scope" value="Bacteria"/>
</dbReference>
<dbReference type="HOGENOM" id="CLU_000604_92_3_5"/>
<dbReference type="Proteomes" id="UP000000552">
    <property type="component" value="Chromosome"/>
</dbReference>
<dbReference type="GO" id="GO:0005886">
    <property type="term" value="C:plasma membrane"/>
    <property type="evidence" value="ECO:0007669"/>
    <property type="project" value="UniProtKB-SubCell"/>
</dbReference>
<dbReference type="GO" id="GO:0015611">
    <property type="term" value="F:ABC-type D-ribose transporter activity"/>
    <property type="evidence" value="ECO:0007669"/>
    <property type="project" value="UniProtKB-EC"/>
</dbReference>
<dbReference type="GO" id="GO:0005524">
    <property type="term" value="F:ATP binding"/>
    <property type="evidence" value="ECO:0007669"/>
    <property type="project" value="UniProtKB-KW"/>
</dbReference>
<dbReference type="GO" id="GO:0016887">
    <property type="term" value="F:ATP hydrolysis activity"/>
    <property type="evidence" value="ECO:0007669"/>
    <property type="project" value="InterPro"/>
</dbReference>
<dbReference type="CDD" id="cd03216">
    <property type="entry name" value="ABC_Carb_Monos_I"/>
    <property type="match status" value="1"/>
</dbReference>
<dbReference type="CDD" id="cd03215">
    <property type="entry name" value="ABC_Carb_Monos_II"/>
    <property type="match status" value="1"/>
</dbReference>
<dbReference type="Gene3D" id="3.40.50.300">
    <property type="entry name" value="P-loop containing nucleotide triphosphate hydrolases"/>
    <property type="match status" value="2"/>
</dbReference>
<dbReference type="InterPro" id="IPR003593">
    <property type="entry name" value="AAA+_ATPase"/>
</dbReference>
<dbReference type="InterPro" id="IPR050107">
    <property type="entry name" value="ABC_carbohydrate_import_ATPase"/>
</dbReference>
<dbReference type="InterPro" id="IPR003439">
    <property type="entry name" value="ABC_transporter-like_ATP-bd"/>
</dbReference>
<dbReference type="InterPro" id="IPR017871">
    <property type="entry name" value="ABC_transporter-like_CS"/>
</dbReference>
<dbReference type="InterPro" id="IPR027417">
    <property type="entry name" value="P-loop_NTPase"/>
</dbReference>
<dbReference type="PANTHER" id="PTHR43790">
    <property type="entry name" value="CARBOHYDRATE TRANSPORT ATP-BINDING PROTEIN MG119-RELATED"/>
    <property type="match status" value="1"/>
</dbReference>
<dbReference type="PANTHER" id="PTHR43790:SF3">
    <property type="entry name" value="D-ALLOSE IMPORT ATP-BINDING PROTEIN ALSA-RELATED"/>
    <property type="match status" value="1"/>
</dbReference>
<dbReference type="Pfam" id="PF00005">
    <property type="entry name" value="ABC_tran"/>
    <property type="match status" value="2"/>
</dbReference>
<dbReference type="SMART" id="SM00382">
    <property type="entry name" value="AAA"/>
    <property type="match status" value="2"/>
</dbReference>
<dbReference type="SUPFAM" id="SSF52540">
    <property type="entry name" value="P-loop containing nucleoside triphosphate hydrolases"/>
    <property type="match status" value="2"/>
</dbReference>
<dbReference type="PROSITE" id="PS00211">
    <property type="entry name" value="ABC_TRANSPORTER_1"/>
    <property type="match status" value="1"/>
</dbReference>
<dbReference type="PROSITE" id="PS50893">
    <property type="entry name" value="ABC_TRANSPORTER_2"/>
    <property type="match status" value="2"/>
</dbReference>
<dbReference type="PROSITE" id="PS51254">
    <property type="entry name" value="RBSA"/>
    <property type="match status" value="1"/>
</dbReference>
<name>RBSA2_RHILO</name>